<keyword id="KW-0963">Cytoplasm</keyword>
<keyword id="KW-0664">Pyridoxine biosynthesis</keyword>
<keyword id="KW-1185">Reference proteome</keyword>
<keyword id="KW-0808">Transferase</keyword>
<dbReference type="EC" id="2.6.99.2" evidence="1"/>
<dbReference type="EMBL" id="CP000633">
    <property type="protein sequence ID" value="ACM37014.1"/>
    <property type="molecule type" value="Genomic_DNA"/>
</dbReference>
<dbReference type="RefSeq" id="WP_015916435.1">
    <property type="nucleotide sequence ID" value="NC_011989.1"/>
</dbReference>
<dbReference type="SMR" id="B9JXN7"/>
<dbReference type="STRING" id="311402.Avi_2794"/>
<dbReference type="KEGG" id="avi:Avi_2794"/>
<dbReference type="eggNOG" id="COG0854">
    <property type="taxonomic scope" value="Bacteria"/>
</dbReference>
<dbReference type="HOGENOM" id="CLU_074563_1_0_5"/>
<dbReference type="UniPathway" id="UPA00244">
    <property type="reaction ID" value="UER00313"/>
</dbReference>
<dbReference type="Proteomes" id="UP000001596">
    <property type="component" value="Chromosome 1"/>
</dbReference>
<dbReference type="GO" id="GO:0005829">
    <property type="term" value="C:cytosol"/>
    <property type="evidence" value="ECO:0007669"/>
    <property type="project" value="TreeGrafter"/>
</dbReference>
<dbReference type="GO" id="GO:0033856">
    <property type="term" value="F:pyridoxine 5'-phosphate synthase activity"/>
    <property type="evidence" value="ECO:0007669"/>
    <property type="project" value="UniProtKB-EC"/>
</dbReference>
<dbReference type="GO" id="GO:0008615">
    <property type="term" value="P:pyridoxine biosynthetic process"/>
    <property type="evidence" value="ECO:0007669"/>
    <property type="project" value="UniProtKB-UniRule"/>
</dbReference>
<dbReference type="CDD" id="cd00003">
    <property type="entry name" value="PNPsynthase"/>
    <property type="match status" value="1"/>
</dbReference>
<dbReference type="Gene3D" id="3.20.20.70">
    <property type="entry name" value="Aldolase class I"/>
    <property type="match status" value="1"/>
</dbReference>
<dbReference type="HAMAP" id="MF_00279">
    <property type="entry name" value="PdxJ"/>
    <property type="match status" value="1"/>
</dbReference>
<dbReference type="InterPro" id="IPR013785">
    <property type="entry name" value="Aldolase_TIM"/>
</dbReference>
<dbReference type="InterPro" id="IPR004569">
    <property type="entry name" value="PyrdxlP_synth_PdxJ"/>
</dbReference>
<dbReference type="InterPro" id="IPR036130">
    <property type="entry name" value="Pyridoxine-5'_phos_synth"/>
</dbReference>
<dbReference type="NCBIfam" id="TIGR00559">
    <property type="entry name" value="pdxJ"/>
    <property type="match status" value="1"/>
</dbReference>
<dbReference type="NCBIfam" id="NF003626">
    <property type="entry name" value="PRK05265.1-4"/>
    <property type="match status" value="1"/>
</dbReference>
<dbReference type="PANTHER" id="PTHR30456">
    <property type="entry name" value="PYRIDOXINE 5'-PHOSPHATE SYNTHASE"/>
    <property type="match status" value="1"/>
</dbReference>
<dbReference type="PANTHER" id="PTHR30456:SF0">
    <property type="entry name" value="PYRIDOXINE 5'-PHOSPHATE SYNTHASE"/>
    <property type="match status" value="1"/>
</dbReference>
<dbReference type="Pfam" id="PF03740">
    <property type="entry name" value="PdxJ"/>
    <property type="match status" value="1"/>
</dbReference>
<dbReference type="SUPFAM" id="SSF63892">
    <property type="entry name" value="Pyridoxine 5'-phosphate synthase"/>
    <property type="match status" value="1"/>
</dbReference>
<reference key="1">
    <citation type="journal article" date="2009" name="J. Bacteriol.">
        <title>Genome sequences of three Agrobacterium biovars help elucidate the evolution of multichromosome genomes in bacteria.</title>
        <authorList>
            <person name="Slater S.C."/>
            <person name="Goldman B.S."/>
            <person name="Goodner B."/>
            <person name="Setubal J.C."/>
            <person name="Farrand S.K."/>
            <person name="Nester E.W."/>
            <person name="Burr T.J."/>
            <person name="Banta L."/>
            <person name="Dickerman A.W."/>
            <person name="Paulsen I."/>
            <person name="Otten L."/>
            <person name="Suen G."/>
            <person name="Welch R."/>
            <person name="Almeida N.F."/>
            <person name="Arnold F."/>
            <person name="Burton O.T."/>
            <person name="Du Z."/>
            <person name="Ewing A."/>
            <person name="Godsy E."/>
            <person name="Heisel S."/>
            <person name="Houmiel K.L."/>
            <person name="Jhaveri J."/>
            <person name="Lu J."/>
            <person name="Miller N.M."/>
            <person name="Norton S."/>
            <person name="Chen Q."/>
            <person name="Phoolcharoen W."/>
            <person name="Ohlin V."/>
            <person name="Ondrusek D."/>
            <person name="Pride N."/>
            <person name="Stricklin S.L."/>
            <person name="Sun J."/>
            <person name="Wheeler C."/>
            <person name="Wilson L."/>
            <person name="Zhu H."/>
            <person name="Wood D.W."/>
        </authorList>
    </citation>
    <scope>NUCLEOTIDE SEQUENCE [LARGE SCALE GENOMIC DNA]</scope>
    <source>
        <strain>ATCC BAA-846 / DSM 112012 / S4</strain>
    </source>
</reference>
<sequence length="250" mass="26978">MPAKLSVNLNAIAMLRNRRDLPWPDVRHFGRLALQAGAQGLTVHPRPDQRHVRFSDLPLLRALIDDEFPKAEFNIEGYPSEDFLQLCEEAQPEQVTLVPDDPSQATSDHGWDFAAHQVFLTDVVARLKAAGMRVSLFADGDGNAQAVATAKATGADRIELYTGPYGSCYDAPEKAARELALLGATADAAHALGMGVNGGHDLTIANLPALAERIPFLAEVSIGHALTADALEFGMAETVRRFRRACGELA</sequence>
<gene>
    <name evidence="1" type="primary">pdxJ</name>
    <name type="ordered locus">Avi_2794</name>
</gene>
<accession>B9JXN7</accession>
<feature type="chain" id="PRO_1000132543" description="Pyridoxine 5'-phosphate synthase">
    <location>
        <begin position="1"/>
        <end position="250"/>
    </location>
</feature>
<feature type="active site" description="Proton acceptor" evidence="1">
    <location>
        <position position="44"/>
    </location>
</feature>
<feature type="active site" description="Proton acceptor" evidence="1">
    <location>
        <position position="76"/>
    </location>
</feature>
<feature type="active site" description="Proton donor" evidence="1">
    <location>
        <position position="200"/>
    </location>
</feature>
<feature type="binding site" evidence="1">
    <location>
        <position position="8"/>
    </location>
    <ligand>
        <name>3-amino-2-oxopropyl phosphate</name>
        <dbReference type="ChEBI" id="CHEBI:57279"/>
    </ligand>
</feature>
<feature type="binding site" evidence="1">
    <location>
        <position position="19"/>
    </location>
    <ligand>
        <name>3-amino-2-oxopropyl phosphate</name>
        <dbReference type="ChEBI" id="CHEBI:57279"/>
    </ligand>
</feature>
<feature type="binding site" evidence="1">
    <location>
        <position position="46"/>
    </location>
    <ligand>
        <name>1-deoxy-D-xylulose 5-phosphate</name>
        <dbReference type="ChEBI" id="CHEBI:57792"/>
    </ligand>
</feature>
<feature type="binding site" evidence="1">
    <location>
        <position position="51"/>
    </location>
    <ligand>
        <name>1-deoxy-D-xylulose 5-phosphate</name>
        <dbReference type="ChEBI" id="CHEBI:57792"/>
    </ligand>
</feature>
<feature type="binding site" evidence="1">
    <location>
        <position position="106"/>
    </location>
    <ligand>
        <name>1-deoxy-D-xylulose 5-phosphate</name>
        <dbReference type="ChEBI" id="CHEBI:57792"/>
    </ligand>
</feature>
<feature type="binding site" evidence="1">
    <location>
        <position position="201"/>
    </location>
    <ligand>
        <name>3-amino-2-oxopropyl phosphate</name>
        <dbReference type="ChEBI" id="CHEBI:57279"/>
    </ligand>
</feature>
<feature type="binding site" evidence="1">
    <location>
        <begin position="223"/>
        <end position="224"/>
    </location>
    <ligand>
        <name>3-amino-2-oxopropyl phosphate</name>
        <dbReference type="ChEBI" id="CHEBI:57279"/>
    </ligand>
</feature>
<feature type="site" description="Transition state stabilizer" evidence="1">
    <location>
        <position position="159"/>
    </location>
</feature>
<evidence type="ECO:0000255" key="1">
    <source>
        <dbReference type="HAMAP-Rule" id="MF_00279"/>
    </source>
</evidence>
<proteinExistence type="inferred from homology"/>
<comment type="function">
    <text evidence="1">Catalyzes the complicated ring closure reaction between the two acyclic compounds 1-deoxy-D-xylulose-5-phosphate (DXP) and 3-amino-2-oxopropyl phosphate (1-amino-acetone-3-phosphate or AAP) to form pyridoxine 5'-phosphate (PNP) and inorganic phosphate.</text>
</comment>
<comment type="catalytic activity">
    <reaction evidence="1">
        <text>3-amino-2-oxopropyl phosphate + 1-deoxy-D-xylulose 5-phosphate = pyridoxine 5'-phosphate + phosphate + 2 H2O + H(+)</text>
        <dbReference type="Rhea" id="RHEA:15265"/>
        <dbReference type="ChEBI" id="CHEBI:15377"/>
        <dbReference type="ChEBI" id="CHEBI:15378"/>
        <dbReference type="ChEBI" id="CHEBI:43474"/>
        <dbReference type="ChEBI" id="CHEBI:57279"/>
        <dbReference type="ChEBI" id="CHEBI:57792"/>
        <dbReference type="ChEBI" id="CHEBI:58589"/>
        <dbReference type="EC" id="2.6.99.2"/>
    </reaction>
</comment>
<comment type="pathway">
    <text evidence="1">Cofactor biosynthesis; pyridoxine 5'-phosphate biosynthesis; pyridoxine 5'-phosphate from D-erythrose 4-phosphate: step 5/5.</text>
</comment>
<comment type="subunit">
    <text evidence="1">Homooctamer; tetramer of dimers.</text>
</comment>
<comment type="subcellular location">
    <subcellularLocation>
        <location evidence="1">Cytoplasm</location>
    </subcellularLocation>
</comment>
<comment type="similarity">
    <text evidence="1">Belongs to the PNP synthase family.</text>
</comment>
<name>PDXJ_ALLAM</name>
<organism>
    <name type="scientific">Allorhizobium ampelinum (strain ATCC BAA-846 / DSM 112012 / S4)</name>
    <name type="common">Agrobacterium vitis (strain S4)</name>
    <dbReference type="NCBI Taxonomy" id="311402"/>
    <lineage>
        <taxon>Bacteria</taxon>
        <taxon>Pseudomonadati</taxon>
        <taxon>Pseudomonadota</taxon>
        <taxon>Alphaproteobacteria</taxon>
        <taxon>Hyphomicrobiales</taxon>
        <taxon>Rhizobiaceae</taxon>
        <taxon>Rhizobium/Agrobacterium group</taxon>
        <taxon>Allorhizobium</taxon>
        <taxon>Allorhizobium ampelinum</taxon>
    </lineage>
</organism>
<protein>
    <recommendedName>
        <fullName evidence="1">Pyridoxine 5'-phosphate synthase</fullName>
        <shortName evidence="1">PNP synthase</shortName>
        <ecNumber evidence="1">2.6.99.2</ecNumber>
    </recommendedName>
</protein>